<comment type="function">
    <text evidence="1">Catalyzes the sequential condensation of isopentenyl diphosphate (IPP) with geranylgeranyl diphosphate (GGPP) to yield (2Z,6Z,10Z,14Z,18Z,22Z,26Z,30E,34E,38E)-undecaprenyl diphosphate (tritrans,heptacis-UPP). It is probably the precursor of glycosyl carrier lipids.</text>
</comment>
<comment type="catalytic activity">
    <reaction evidence="1">
        <text>geranylgeranyl diphosphate + 7 isopentenyl diphosphate = tri-trans,hepta-cis-undecaprenyl diphosphate + 7 diphosphate</text>
        <dbReference type="Rhea" id="RHEA:27622"/>
        <dbReference type="ChEBI" id="CHEBI:33019"/>
        <dbReference type="ChEBI" id="CHEBI:57533"/>
        <dbReference type="ChEBI" id="CHEBI:60388"/>
        <dbReference type="ChEBI" id="CHEBI:128769"/>
        <dbReference type="EC" id="2.5.1.89"/>
    </reaction>
</comment>
<comment type="cofactor">
    <cofactor evidence="1">
        <name>Mg(2+)</name>
        <dbReference type="ChEBI" id="CHEBI:18420"/>
    </cofactor>
    <text evidence="1">Binds 2 magnesium ions per subunit.</text>
</comment>
<comment type="subunit">
    <text evidence="1">Homodimer.</text>
</comment>
<comment type="similarity">
    <text evidence="1">Belongs to the UPP synthase family.</text>
</comment>
<dbReference type="EC" id="2.5.1.89" evidence="1"/>
<dbReference type="EMBL" id="AL445064">
    <property type="protein sequence ID" value="CAC11686.1"/>
    <property type="molecule type" value="Genomic_DNA"/>
</dbReference>
<dbReference type="RefSeq" id="WP_010900971.1">
    <property type="nucleotide sequence ID" value="NC_002578.1"/>
</dbReference>
<dbReference type="SMR" id="Q9HKQ0"/>
<dbReference type="FunCoup" id="Q9HKQ0">
    <property type="interactions" value="117"/>
</dbReference>
<dbReference type="STRING" id="273075.gene:9571766"/>
<dbReference type="PaxDb" id="273075-Ta0546"/>
<dbReference type="EnsemblBacteria" id="CAC11686">
    <property type="protein sequence ID" value="CAC11686"/>
    <property type="gene ID" value="CAC11686"/>
</dbReference>
<dbReference type="KEGG" id="tac:Ta0546"/>
<dbReference type="eggNOG" id="arCOG01532">
    <property type="taxonomic scope" value="Archaea"/>
</dbReference>
<dbReference type="HOGENOM" id="CLU_038505_2_0_2"/>
<dbReference type="InParanoid" id="Q9HKQ0"/>
<dbReference type="OrthoDB" id="8293at2157"/>
<dbReference type="Proteomes" id="UP000001024">
    <property type="component" value="Chromosome"/>
</dbReference>
<dbReference type="GO" id="GO:0045547">
    <property type="term" value="F:ditrans,polycis-polyprenyl diphosphate synthase [(2E,6E)-farnesyl diphosphate specific] activity"/>
    <property type="evidence" value="ECO:0007669"/>
    <property type="project" value="TreeGrafter"/>
</dbReference>
<dbReference type="GO" id="GO:0000287">
    <property type="term" value="F:magnesium ion binding"/>
    <property type="evidence" value="ECO:0007669"/>
    <property type="project" value="UniProtKB-UniRule"/>
</dbReference>
<dbReference type="GO" id="GO:0016094">
    <property type="term" value="P:polyprenol biosynthetic process"/>
    <property type="evidence" value="ECO:0007669"/>
    <property type="project" value="TreeGrafter"/>
</dbReference>
<dbReference type="CDD" id="cd00475">
    <property type="entry name" value="Cis_IPPS"/>
    <property type="match status" value="1"/>
</dbReference>
<dbReference type="FunFam" id="3.40.1180.10:FF:000003">
    <property type="entry name" value="Isoprenyl transferase 2"/>
    <property type="match status" value="1"/>
</dbReference>
<dbReference type="Gene3D" id="3.40.1180.10">
    <property type="entry name" value="Decaprenyl diphosphate synthase-like"/>
    <property type="match status" value="1"/>
</dbReference>
<dbReference type="HAMAP" id="MF_01139">
    <property type="entry name" value="ISPT"/>
    <property type="match status" value="1"/>
</dbReference>
<dbReference type="InterPro" id="IPR001441">
    <property type="entry name" value="UPP_synth-like"/>
</dbReference>
<dbReference type="InterPro" id="IPR018520">
    <property type="entry name" value="UPP_synth-like_CS"/>
</dbReference>
<dbReference type="InterPro" id="IPR036424">
    <property type="entry name" value="UPP_synth-like_sf"/>
</dbReference>
<dbReference type="NCBIfam" id="TIGR00055">
    <property type="entry name" value="uppS"/>
    <property type="match status" value="1"/>
</dbReference>
<dbReference type="PANTHER" id="PTHR10291:SF43">
    <property type="entry name" value="DEHYDRODOLICHYL DIPHOSPHATE SYNTHASE COMPLEX SUBUNIT DHDDS"/>
    <property type="match status" value="1"/>
</dbReference>
<dbReference type="PANTHER" id="PTHR10291">
    <property type="entry name" value="DEHYDRODOLICHYL DIPHOSPHATE SYNTHASE FAMILY MEMBER"/>
    <property type="match status" value="1"/>
</dbReference>
<dbReference type="Pfam" id="PF01255">
    <property type="entry name" value="Prenyltransf"/>
    <property type="match status" value="1"/>
</dbReference>
<dbReference type="SUPFAM" id="SSF64005">
    <property type="entry name" value="Undecaprenyl diphosphate synthase"/>
    <property type="match status" value="1"/>
</dbReference>
<dbReference type="PROSITE" id="PS01066">
    <property type="entry name" value="UPP_SYNTHASE"/>
    <property type="match status" value="1"/>
</dbReference>
<gene>
    <name evidence="1" type="primary">uppS</name>
    <name type="ordered locus">Ta0546</name>
</gene>
<protein>
    <recommendedName>
        <fullName evidence="1">Tritrans,polycis-undecaprenyl-diphosphate synthase (geranylgeranyl-diphosphate specific)</fullName>
        <ecNumber evidence="1">2.5.1.89</ecNumber>
    </recommendedName>
    <alternativeName>
        <fullName evidence="1">Undecaprenyl diphosphate synthase</fullName>
        <shortName evidence="1">UDS</shortName>
    </alternativeName>
    <alternativeName>
        <fullName evidence="1">Undecaprenyl pyrophosphate synthase</fullName>
        <shortName evidence="1">UPP synthase</shortName>
    </alternativeName>
</protein>
<organism>
    <name type="scientific">Thermoplasma acidophilum (strain ATCC 25905 / DSM 1728 / JCM 9062 / NBRC 15155 / AMRC-C165)</name>
    <dbReference type="NCBI Taxonomy" id="273075"/>
    <lineage>
        <taxon>Archaea</taxon>
        <taxon>Methanobacteriati</taxon>
        <taxon>Thermoplasmatota</taxon>
        <taxon>Thermoplasmata</taxon>
        <taxon>Thermoplasmatales</taxon>
        <taxon>Thermoplasmataceae</taxon>
        <taxon>Thermoplasma</taxon>
    </lineage>
</organism>
<reference key="1">
    <citation type="journal article" date="2000" name="Nature">
        <title>The genome sequence of the thermoacidophilic scavenger Thermoplasma acidophilum.</title>
        <authorList>
            <person name="Ruepp A."/>
            <person name="Graml W."/>
            <person name="Santos-Martinez M.-L."/>
            <person name="Koretke K.K."/>
            <person name="Volker C."/>
            <person name="Mewes H.-W."/>
            <person name="Frishman D."/>
            <person name="Stocker S."/>
            <person name="Lupas A.N."/>
            <person name="Baumeister W."/>
        </authorList>
    </citation>
    <scope>NUCLEOTIDE SEQUENCE [LARGE SCALE GENOMIC DNA]</scope>
    <source>
        <strain>ATCC 25905 / DSM 1728 / JCM 9062 / NBRC 15155 / AMRC-C165</strain>
    </source>
</reference>
<evidence type="ECO:0000255" key="1">
    <source>
        <dbReference type="HAMAP-Rule" id="MF_01139"/>
    </source>
</evidence>
<proteinExistence type="inferred from homology"/>
<keyword id="KW-0460">Magnesium</keyword>
<keyword id="KW-0479">Metal-binding</keyword>
<keyword id="KW-1185">Reference proteome</keyword>
<keyword id="KW-0808">Transferase</keyword>
<sequence>MSVSNKLGDLASKVYENVLLEEVKKYPRPRHIGIITDGNRRYARNVGISENEGHVKGKEKVEEVVDWCMELDIRIVTFYAFSTENFRRSPEEVDFLFHLIDNAFKSLLKDERVYKNRINVKVIGNLSILPAYLRQTIHIVEETTKNFNNYQLNLAIGYGGREEILDAIKRITRDAMDGKLNIDELDEEKFRMYLYDGRIPDPDLILRTSGEERISNFLLWQSAYSELYFSDVYWPEFSKLDFLRAIYSYQRRQRRFGR</sequence>
<feature type="chain" id="PRO_0000123744" description="Tritrans,polycis-undecaprenyl-diphosphate synthase (geranylgeranyl-diphosphate specific)">
    <location>
        <begin position="1"/>
        <end position="258"/>
    </location>
</feature>
<feature type="active site" evidence="1">
    <location>
        <position position="37"/>
    </location>
</feature>
<feature type="active site" description="Proton acceptor" evidence="1">
    <location>
        <position position="85"/>
    </location>
</feature>
<feature type="binding site" evidence="1">
    <location>
        <position position="37"/>
    </location>
    <ligand>
        <name>Mg(2+)</name>
        <dbReference type="ChEBI" id="CHEBI:18420"/>
    </ligand>
</feature>
<feature type="binding site" evidence="1">
    <location>
        <begin position="38"/>
        <end position="41"/>
    </location>
    <ligand>
        <name>substrate</name>
    </ligand>
</feature>
<feature type="binding site" evidence="1">
    <location>
        <position position="54"/>
    </location>
    <ligand>
        <name>substrate</name>
    </ligand>
</feature>
<feature type="binding site" evidence="1">
    <location>
        <begin position="82"/>
        <end position="84"/>
    </location>
    <ligand>
        <name>substrate</name>
    </ligand>
</feature>
<feature type="binding site" evidence="1">
    <location>
        <position position="86"/>
    </location>
    <ligand>
        <name>substrate</name>
    </ligand>
</feature>
<feature type="binding site" evidence="1">
    <location>
        <position position="88"/>
    </location>
    <ligand>
        <name>substrate</name>
    </ligand>
</feature>
<feature type="binding site" evidence="1">
    <location>
        <position position="207"/>
    </location>
    <ligand>
        <name>substrate</name>
    </ligand>
</feature>
<feature type="binding site" evidence="1">
    <location>
        <begin position="213"/>
        <end position="215"/>
    </location>
    <ligand>
        <name>substrate</name>
    </ligand>
</feature>
<feature type="binding site" evidence="1">
    <location>
        <position position="226"/>
    </location>
    <ligand>
        <name>Mg(2+)</name>
        <dbReference type="ChEBI" id="CHEBI:18420"/>
    </ligand>
</feature>
<name>UPPS_THEAC</name>
<accession>Q9HKQ0</accession>